<evidence type="ECO:0000255" key="1">
    <source>
        <dbReference type="HAMAP-Rule" id="MF_00039"/>
    </source>
</evidence>
<proteinExistence type="inferred from homology"/>
<organism>
    <name type="scientific">Thermococcus gammatolerans (strain DSM 15229 / JCM 11827 / EJ3)</name>
    <dbReference type="NCBI Taxonomy" id="593117"/>
    <lineage>
        <taxon>Archaea</taxon>
        <taxon>Methanobacteriati</taxon>
        <taxon>Methanobacteriota</taxon>
        <taxon>Thermococci</taxon>
        <taxon>Thermococcales</taxon>
        <taxon>Thermococcaceae</taxon>
        <taxon>Thermococcus</taxon>
    </lineage>
</organism>
<accession>C5A628</accession>
<gene>
    <name type="ordered locus">TGAM_1188</name>
</gene>
<feature type="chain" id="PRO_1000202088" description="Putative adenylate kinase">
    <location>
        <begin position="1"/>
        <end position="177"/>
    </location>
</feature>
<feature type="region of interest" description="NMP" evidence="1">
    <location>
        <begin position="30"/>
        <end position="50"/>
    </location>
</feature>
<feature type="region of interest" description="LID" evidence="1">
    <location>
        <begin position="99"/>
        <end position="109"/>
    </location>
</feature>
<feature type="binding site" evidence="1">
    <location>
        <position position="10"/>
    </location>
    <ligand>
        <name>ATP</name>
        <dbReference type="ChEBI" id="CHEBI:30616"/>
    </ligand>
</feature>
<feature type="binding site" evidence="1">
    <location>
        <position position="12"/>
    </location>
    <ligand>
        <name>ATP</name>
        <dbReference type="ChEBI" id="CHEBI:30616"/>
    </ligand>
</feature>
<feature type="binding site" evidence="1">
    <location>
        <position position="13"/>
    </location>
    <ligand>
        <name>ATP</name>
        <dbReference type="ChEBI" id="CHEBI:30616"/>
    </ligand>
</feature>
<feature type="binding site" evidence="1">
    <location>
        <position position="14"/>
    </location>
    <ligand>
        <name>ATP</name>
        <dbReference type="ChEBI" id="CHEBI:30616"/>
    </ligand>
</feature>
<feature type="binding site" evidence="1">
    <location>
        <position position="15"/>
    </location>
    <ligand>
        <name>ATP</name>
        <dbReference type="ChEBI" id="CHEBI:30616"/>
    </ligand>
</feature>
<feature type="binding site" evidence="1">
    <location>
        <position position="100"/>
    </location>
    <ligand>
        <name>ATP</name>
        <dbReference type="ChEBI" id="CHEBI:30616"/>
    </ligand>
</feature>
<feature type="binding site" evidence="1">
    <location>
        <position position="138"/>
    </location>
    <ligand>
        <name>ATP</name>
        <dbReference type="ChEBI" id="CHEBI:30616"/>
    </ligand>
</feature>
<comment type="function">
    <text evidence="1">Broad-specificity nucleoside monophosphate (NMP) kinase that catalyzes the reversible transfer of the terminal phosphate group between nucleoside triphosphates and monophosphates. Also has ATPase activity. Involved in the late maturation steps of the 30S ribosomal particles, specifically 16S rRNA maturation. While NMP activity is not required for ribosome maturation, ATPase activity is. Associates transiently with small ribosomal subunit protein uS11. ATP hydrolysis breaks the interaction with uS11. May temporarily remove uS11 from the ribosome to enable a conformational change of the ribosomal RNA that is needed for the final maturation step of the small ribosomal subunit.</text>
</comment>
<comment type="catalytic activity">
    <reaction evidence="1">
        <text>AMP + ATP = 2 ADP</text>
        <dbReference type="Rhea" id="RHEA:12973"/>
        <dbReference type="ChEBI" id="CHEBI:30616"/>
        <dbReference type="ChEBI" id="CHEBI:456215"/>
        <dbReference type="ChEBI" id="CHEBI:456216"/>
        <dbReference type="EC" id="2.7.4.3"/>
    </reaction>
</comment>
<comment type="catalytic activity">
    <reaction evidence="1">
        <text>ATP + H2O = ADP + phosphate + H(+)</text>
        <dbReference type="Rhea" id="RHEA:13065"/>
        <dbReference type="ChEBI" id="CHEBI:15377"/>
        <dbReference type="ChEBI" id="CHEBI:15378"/>
        <dbReference type="ChEBI" id="CHEBI:30616"/>
        <dbReference type="ChEBI" id="CHEBI:43474"/>
        <dbReference type="ChEBI" id="CHEBI:456216"/>
    </reaction>
</comment>
<comment type="subunit">
    <text evidence="1">Interacts with uS11. Not a structural component of 40S pre-ribosomes, but transiently interacts with them by binding to uS11.</text>
</comment>
<comment type="similarity">
    <text evidence="1">Belongs to the adenylate kinase family. AK6 subfamily.</text>
</comment>
<reference key="1">
    <citation type="journal article" date="2007" name="Genome Biol.">
        <title>Genome analysis and genome-wide proteomics of Thermococcus gammatolerans, the most radioresistant organism known amongst the Archaea.</title>
        <authorList>
            <person name="Zivanovic Y."/>
            <person name="Armengaud J."/>
            <person name="Lagorce A."/>
            <person name="Leplat C."/>
            <person name="Guerin P."/>
            <person name="Dutertre M."/>
            <person name="Anthouard V."/>
            <person name="Forterre P."/>
            <person name="Wincker P."/>
            <person name="Confalonieri F."/>
        </authorList>
    </citation>
    <scope>NUCLEOTIDE SEQUENCE [LARGE SCALE GENOMIC DNA]</scope>
    <source>
        <strain>DSM 15229 / JCM 11827 / EJ3</strain>
    </source>
</reference>
<sequence length="177" mass="19887">MIIAVTGTPGVGKTTVSKLLAEKLGYEYVSLRDYAIEKGIGEMKGDELEVEVDELTYNFERDFKGKNVVVDGHLSHFLNADLVVVLRAHPRLIGERLTERGYSREKVGENVEAELVDVILVEALEENENVIEVDTTGKTPEEVVNEILELIEKGVKKRVGVVDWSEVYDEVIPYLRL</sequence>
<protein>
    <recommendedName>
        <fullName evidence="1">Putative adenylate kinase</fullName>
        <shortName evidence="1">AK</shortName>
        <ecNumber evidence="1">2.7.4.3</ecNumber>
    </recommendedName>
    <alternativeName>
        <fullName evidence="1">ATP-AMP transphosphorylase</fullName>
    </alternativeName>
</protein>
<dbReference type="EC" id="2.7.4.3" evidence="1"/>
<dbReference type="EMBL" id="CP001398">
    <property type="protein sequence ID" value="ACS33690.1"/>
    <property type="molecule type" value="Genomic_DNA"/>
</dbReference>
<dbReference type="RefSeq" id="WP_015858803.1">
    <property type="nucleotide sequence ID" value="NC_012804.1"/>
</dbReference>
<dbReference type="SMR" id="C5A628"/>
<dbReference type="STRING" id="593117.TGAM_1188"/>
<dbReference type="PaxDb" id="593117-TGAM_1188"/>
<dbReference type="GeneID" id="7988575"/>
<dbReference type="KEGG" id="tga:TGAM_1188"/>
<dbReference type="PATRIC" id="fig|593117.10.peg.1187"/>
<dbReference type="eggNOG" id="arCOG01038">
    <property type="taxonomic scope" value="Archaea"/>
</dbReference>
<dbReference type="HOGENOM" id="CLU_079096_0_1_2"/>
<dbReference type="OrthoDB" id="8730at2157"/>
<dbReference type="Proteomes" id="UP000001488">
    <property type="component" value="Chromosome"/>
</dbReference>
<dbReference type="GO" id="GO:0004017">
    <property type="term" value="F:adenylate kinase activity"/>
    <property type="evidence" value="ECO:0007669"/>
    <property type="project" value="UniProtKB-UniRule"/>
</dbReference>
<dbReference type="GO" id="GO:0005524">
    <property type="term" value="F:ATP binding"/>
    <property type="evidence" value="ECO:0007669"/>
    <property type="project" value="UniProtKB-UniRule"/>
</dbReference>
<dbReference type="GO" id="GO:0016887">
    <property type="term" value="F:ATP hydrolysis activity"/>
    <property type="evidence" value="ECO:0007669"/>
    <property type="project" value="InterPro"/>
</dbReference>
<dbReference type="GO" id="GO:0042274">
    <property type="term" value="P:ribosomal small subunit biogenesis"/>
    <property type="evidence" value="ECO:0007669"/>
    <property type="project" value="UniProtKB-UniRule"/>
</dbReference>
<dbReference type="GO" id="GO:0006364">
    <property type="term" value="P:rRNA processing"/>
    <property type="evidence" value="ECO:0007669"/>
    <property type="project" value="UniProtKB-KW"/>
</dbReference>
<dbReference type="Gene3D" id="3.40.50.300">
    <property type="entry name" value="P-loop containing nucleotide triphosphate hydrolases"/>
    <property type="match status" value="1"/>
</dbReference>
<dbReference type="HAMAP" id="MF_00039">
    <property type="entry name" value="Adenylate_kinase_AK6"/>
    <property type="match status" value="1"/>
</dbReference>
<dbReference type="InterPro" id="IPR020618">
    <property type="entry name" value="Adenyl_kinase_AK6"/>
</dbReference>
<dbReference type="InterPro" id="IPR027417">
    <property type="entry name" value="P-loop_NTPase"/>
</dbReference>
<dbReference type="NCBIfam" id="NF003012">
    <property type="entry name" value="PRK03839.1"/>
    <property type="match status" value="1"/>
</dbReference>
<dbReference type="PANTHER" id="PTHR12595:SF0">
    <property type="entry name" value="ADENYLATE KINASE ISOENZYME 6"/>
    <property type="match status" value="1"/>
</dbReference>
<dbReference type="PANTHER" id="PTHR12595">
    <property type="entry name" value="POS9-ACTIVATING FACTOR FAP7-RELATED"/>
    <property type="match status" value="1"/>
</dbReference>
<dbReference type="Pfam" id="PF13238">
    <property type="entry name" value="AAA_18"/>
    <property type="match status" value="1"/>
</dbReference>
<dbReference type="SUPFAM" id="SSF52540">
    <property type="entry name" value="P-loop containing nucleoside triphosphate hydrolases"/>
    <property type="match status" value="1"/>
</dbReference>
<name>KAD6_THEGJ</name>
<keyword id="KW-0067">ATP-binding</keyword>
<keyword id="KW-0418">Kinase</keyword>
<keyword id="KW-0547">Nucleotide-binding</keyword>
<keyword id="KW-1185">Reference proteome</keyword>
<keyword id="KW-0690">Ribosome biogenesis</keyword>
<keyword id="KW-0698">rRNA processing</keyword>
<keyword id="KW-0808">Transferase</keyword>